<comment type="function">
    <text evidence="1">Required for the proteolytic cleavage of the transcription factor RIM101 in response to alkaline ambient pH.</text>
</comment>
<comment type="similarity">
    <text evidence="2">Belongs to the peptidase C2 family. PalB/RIM13 subfamily.</text>
</comment>
<proteinExistence type="inferred from homology"/>
<reference key="1">
    <citation type="journal article" date="2004" name="Nature">
        <title>Genome evolution in yeasts.</title>
        <authorList>
            <person name="Dujon B."/>
            <person name="Sherman D."/>
            <person name="Fischer G."/>
            <person name="Durrens P."/>
            <person name="Casaregola S."/>
            <person name="Lafontaine I."/>
            <person name="de Montigny J."/>
            <person name="Marck C."/>
            <person name="Neuveglise C."/>
            <person name="Talla E."/>
            <person name="Goffard N."/>
            <person name="Frangeul L."/>
            <person name="Aigle M."/>
            <person name="Anthouard V."/>
            <person name="Babour A."/>
            <person name="Barbe V."/>
            <person name="Barnay S."/>
            <person name="Blanchin S."/>
            <person name="Beckerich J.-M."/>
            <person name="Beyne E."/>
            <person name="Bleykasten C."/>
            <person name="Boisrame A."/>
            <person name="Boyer J."/>
            <person name="Cattolico L."/>
            <person name="Confanioleri F."/>
            <person name="de Daruvar A."/>
            <person name="Despons L."/>
            <person name="Fabre E."/>
            <person name="Fairhead C."/>
            <person name="Ferry-Dumazet H."/>
            <person name="Groppi A."/>
            <person name="Hantraye F."/>
            <person name="Hennequin C."/>
            <person name="Jauniaux N."/>
            <person name="Joyet P."/>
            <person name="Kachouri R."/>
            <person name="Kerrest A."/>
            <person name="Koszul R."/>
            <person name="Lemaire M."/>
            <person name="Lesur I."/>
            <person name="Ma L."/>
            <person name="Muller H."/>
            <person name="Nicaud J.-M."/>
            <person name="Nikolski M."/>
            <person name="Oztas S."/>
            <person name="Ozier-Kalogeropoulos O."/>
            <person name="Pellenz S."/>
            <person name="Potier S."/>
            <person name="Richard G.-F."/>
            <person name="Straub M.-L."/>
            <person name="Suleau A."/>
            <person name="Swennen D."/>
            <person name="Tekaia F."/>
            <person name="Wesolowski-Louvel M."/>
            <person name="Westhof E."/>
            <person name="Wirth B."/>
            <person name="Zeniou-Meyer M."/>
            <person name="Zivanovic Y."/>
            <person name="Bolotin-Fukuhara M."/>
            <person name="Thierry A."/>
            <person name="Bouchier C."/>
            <person name="Caudron B."/>
            <person name="Scarpelli C."/>
            <person name="Gaillardin C."/>
            <person name="Weissenbach J."/>
            <person name="Wincker P."/>
            <person name="Souciet J.-L."/>
        </authorList>
    </citation>
    <scope>NUCLEOTIDE SEQUENCE [LARGE SCALE GENOMIC DNA]</scope>
    <source>
        <strain>ATCC 2001 / BCRC 20586 / JCM 3761 / NBRC 0622 / NRRL Y-65 / CBS 138</strain>
    </source>
</reference>
<gene>
    <name type="primary">RIM13</name>
    <name type="ordered locus">CAGL0M09669g</name>
</gene>
<organism>
    <name type="scientific">Candida glabrata (strain ATCC 2001 / BCRC 20586 / JCM 3761 / NBRC 0622 / NRRL Y-65 / CBS 138)</name>
    <name type="common">Yeast</name>
    <name type="synonym">Nakaseomyces glabratus</name>
    <dbReference type="NCBI Taxonomy" id="284593"/>
    <lineage>
        <taxon>Eukaryota</taxon>
        <taxon>Fungi</taxon>
        <taxon>Dikarya</taxon>
        <taxon>Ascomycota</taxon>
        <taxon>Saccharomycotina</taxon>
        <taxon>Saccharomycetes</taxon>
        <taxon>Saccharomycetales</taxon>
        <taxon>Saccharomycetaceae</taxon>
        <taxon>Nakaseomyces</taxon>
    </lineage>
</organism>
<evidence type="ECO:0000250" key="1"/>
<evidence type="ECO:0000305" key="2"/>
<accession>Q6FJ28</accession>
<dbReference type="EC" id="3.4.22.-"/>
<dbReference type="EMBL" id="CR380959">
    <property type="protein sequence ID" value="CAG62744.1"/>
    <property type="molecule type" value="Genomic_DNA"/>
</dbReference>
<dbReference type="RefSeq" id="XP_449766.1">
    <property type="nucleotide sequence ID" value="XM_449766.1"/>
</dbReference>
<dbReference type="SMR" id="Q6FJ28"/>
<dbReference type="FunCoup" id="Q6FJ28">
    <property type="interactions" value="33"/>
</dbReference>
<dbReference type="STRING" id="284593.Q6FJ28"/>
<dbReference type="EnsemblFungi" id="CAGL0M09669g-T">
    <property type="protein sequence ID" value="CAGL0M09669g-T-p1"/>
    <property type="gene ID" value="CAGL0M09669g"/>
</dbReference>
<dbReference type="KEGG" id="cgr:2891330"/>
<dbReference type="CGD" id="CAL0136251">
    <property type="gene designation" value="CAGL0M09669g"/>
</dbReference>
<dbReference type="VEuPathDB" id="FungiDB:CAGL0M09669g"/>
<dbReference type="eggNOG" id="KOG0045">
    <property type="taxonomic scope" value="Eukaryota"/>
</dbReference>
<dbReference type="HOGENOM" id="CLU_395483_0_0_1"/>
<dbReference type="InParanoid" id="Q6FJ28"/>
<dbReference type="OMA" id="GWLPQII"/>
<dbReference type="Proteomes" id="UP000002428">
    <property type="component" value="Chromosome M"/>
</dbReference>
<dbReference type="GO" id="GO:0004197">
    <property type="term" value="F:cysteine-type endopeptidase activity"/>
    <property type="evidence" value="ECO:0007669"/>
    <property type="project" value="TreeGrafter"/>
</dbReference>
<dbReference type="GO" id="GO:0006508">
    <property type="term" value="P:proteolysis"/>
    <property type="evidence" value="ECO:0007669"/>
    <property type="project" value="UniProtKB-KW"/>
</dbReference>
<dbReference type="InterPro" id="IPR051297">
    <property type="entry name" value="PalB/RIM13_Calpain-like"/>
</dbReference>
<dbReference type="InterPro" id="IPR038765">
    <property type="entry name" value="Papain-like_cys_pep_sf"/>
</dbReference>
<dbReference type="PANTHER" id="PTHR46143">
    <property type="entry name" value="CALPAIN-7"/>
    <property type="match status" value="1"/>
</dbReference>
<dbReference type="PANTHER" id="PTHR46143:SF1">
    <property type="entry name" value="CALPAIN-7"/>
    <property type="match status" value="1"/>
</dbReference>
<dbReference type="SUPFAM" id="SSF54001">
    <property type="entry name" value="Cysteine proteinases"/>
    <property type="match status" value="1"/>
</dbReference>
<sequence>MNVDRCWEQYYKTLKLIYLEENKETCQREIDHLVDTAIELKEKTYSNAVLDLGRQFREVCPKARIMWKTSSIAGNFYPPISISDIYSPVIANVFDQTTRLECRRQEYSLRMPLQEEPNFTGIQQHAQVSDCSLVVSLININRYKTTMPVVKQVAENLYATNLYFNGAQRRLVLVSTENIPTMQDDPTKQMSVHSANKINKILELGLLKLTSLSYHSEGSNTAIDTYRLCGWIPDISSINEFNFLKVHKAFSRGECLIAMGTGGFVPKENIFGVKLRKYHDYAVLDIDMINEVVTLRDPLISDTLLTINFDSIRKYFLQVYCNWDSSKLFMFTKDTQIFYSDKKFNPYQTLAGKPTFYLKNNSDRDEYAWVLLEFHLDKNNNTTAYLQEIPDRISTVRLGYNDNSAETGFQLIKIRLKPKQCIWYFCYSSTDKMLTFHTYSTSSDVVFVRSKMPGCDFDVTECAILPENIVPMQYPNHSETDIYYLASIDFSIEGEPGITIITDMVVCLETDDDLVNFQMFHWDDLDFNSPIYDEFYMNERMFEKKDLPLTSGERYRIVASTARPPISKGYQCAVSGINIHADYPCSYKLRESDVRYNSMMFKLPHVFTLASTGITKISLVNRNKYNKVFMRIYPQTQEDYRYNYRVISADTGEDLVKPGNNIQKLYGGIVIKEFLVSDQTNLELHLSFQDNGRVPVELKCQLYVGSVKIITLS</sequence>
<feature type="chain" id="PRO_0000207739" description="Calpain-like protease palB/RIM13">
    <location>
        <begin position="1"/>
        <end position="713"/>
    </location>
</feature>
<feature type="domain" description="Calpain catalytic">
    <location>
        <begin position="74"/>
        <end position="325"/>
    </location>
</feature>
<feature type="active site" evidence="1">
    <location>
        <position position="131"/>
    </location>
</feature>
<feature type="active site" evidence="1">
    <location>
        <position position="279"/>
    </location>
</feature>
<feature type="active site" evidence="1">
    <location>
        <position position="308"/>
    </location>
</feature>
<name>PALB_CANGA</name>
<protein>
    <recommendedName>
        <fullName>Calpain-like protease palB/RIM13</fullName>
        <ecNumber>3.4.22.-</ecNumber>
    </recommendedName>
    <alternativeName>
        <fullName>Cysteine protease RIM13</fullName>
    </alternativeName>
</protein>
<keyword id="KW-0378">Hydrolase</keyword>
<keyword id="KW-0645">Protease</keyword>
<keyword id="KW-1185">Reference proteome</keyword>
<keyword id="KW-0788">Thiol protease</keyword>